<evidence type="ECO:0000250" key="1"/>
<evidence type="ECO:0000250" key="2">
    <source>
        <dbReference type="UniProtKB" id="P21263"/>
    </source>
</evidence>
<evidence type="ECO:0000250" key="3">
    <source>
        <dbReference type="UniProtKB" id="P48681"/>
    </source>
</evidence>
<evidence type="ECO:0000255" key="4">
    <source>
        <dbReference type="PROSITE-ProRule" id="PRU01188"/>
    </source>
</evidence>
<evidence type="ECO:0000256" key="5">
    <source>
        <dbReference type="SAM" id="MobiDB-lite"/>
    </source>
</evidence>
<evidence type="ECO:0000269" key="6">
    <source>
    </source>
</evidence>
<evidence type="ECO:0000303" key="7">
    <source>
    </source>
</evidence>
<evidence type="ECO:0000305" key="8"/>
<evidence type="ECO:0007744" key="9">
    <source>
    </source>
</evidence>
<evidence type="ECO:0007744" key="10">
    <source>
    </source>
</evidence>
<evidence type="ECO:0007744" key="11">
    <source>
    </source>
</evidence>
<dbReference type="EMBL" id="AF076623">
    <property type="protein sequence ID" value="AAF04456.2"/>
    <property type="molecule type" value="mRNA"/>
</dbReference>
<dbReference type="EMBL" id="BC060693">
    <property type="protein sequence ID" value="AAH60693.1"/>
    <property type="molecule type" value="mRNA"/>
</dbReference>
<dbReference type="EMBL" id="BC062893">
    <property type="protein sequence ID" value="AAH62893.1"/>
    <property type="molecule type" value="mRNA"/>
</dbReference>
<dbReference type="EMBL" id="AK009706">
    <property type="protein sequence ID" value="BAB26451.1"/>
    <property type="molecule type" value="mRNA"/>
</dbReference>
<dbReference type="EMBL" id="AK075690">
    <property type="protein sequence ID" value="BAC35892.1"/>
    <property type="molecule type" value="mRNA"/>
</dbReference>
<dbReference type="EMBL" id="S78708">
    <property type="protein sequence ID" value="AAP32014.1"/>
    <property type="molecule type" value="mRNA"/>
</dbReference>
<dbReference type="EMBL" id="EF101559">
    <property type="protein sequence ID" value="ABK96808.1"/>
    <property type="molecule type" value="mRNA"/>
</dbReference>
<dbReference type="CCDS" id="CCDS17461.1">
    <molecule id="Q6P5H2-1"/>
</dbReference>
<dbReference type="RefSeq" id="NP_057910.3">
    <molecule id="Q6P5H2-1"/>
    <property type="nucleotide sequence ID" value="NM_016701.3"/>
</dbReference>
<dbReference type="SMR" id="Q6P5H2"/>
<dbReference type="BioGRID" id="201730">
    <property type="interactions" value="19"/>
</dbReference>
<dbReference type="FunCoup" id="Q6P5H2">
    <property type="interactions" value="134"/>
</dbReference>
<dbReference type="IntAct" id="Q6P5H2">
    <property type="interactions" value="11"/>
</dbReference>
<dbReference type="MINT" id="Q6P5H2"/>
<dbReference type="STRING" id="10090.ENSMUSP00000088493"/>
<dbReference type="GlyGen" id="Q6P5H2">
    <property type="glycosylation" value="1 site, 1 O-linked glycan (1 site)"/>
</dbReference>
<dbReference type="iPTMnet" id="Q6P5H2"/>
<dbReference type="PhosphoSitePlus" id="Q6P5H2"/>
<dbReference type="jPOST" id="Q6P5H2"/>
<dbReference type="PaxDb" id="10090-ENSMUSP00000088493"/>
<dbReference type="PeptideAtlas" id="Q6P5H2"/>
<dbReference type="ProteomicsDB" id="252809">
    <molecule id="Q6P5H2-1"/>
</dbReference>
<dbReference type="ProteomicsDB" id="252810">
    <molecule id="Q6P5H2-2"/>
</dbReference>
<dbReference type="Pumba" id="Q6P5H2"/>
<dbReference type="Antibodypedia" id="1658">
    <property type="antibodies" value="1100 antibodies from 49 providers"/>
</dbReference>
<dbReference type="Ensembl" id="ENSMUST00000090973.12">
    <molecule id="Q6P5H2-1"/>
    <property type="protein sequence ID" value="ENSMUSP00000088493.6"/>
    <property type="gene ID" value="ENSMUSG00000004891.17"/>
</dbReference>
<dbReference type="Ensembl" id="ENSMUST00000160694.2">
    <molecule id="Q6P5H2-2"/>
    <property type="protein sequence ID" value="ENSMUSP00000125571.2"/>
    <property type="gene ID" value="ENSMUSG00000004891.17"/>
</dbReference>
<dbReference type="GeneID" id="18008"/>
<dbReference type="KEGG" id="mmu:18008"/>
<dbReference type="UCSC" id="uc008ptm.1">
    <molecule id="Q6P5H2-2"/>
    <property type="organism name" value="mouse"/>
</dbReference>
<dbReference type="UCSC" id="uc008ptn.1">
    <molecule id="Q6P5H2-1"/>
    <property type="organism name" value="mouse"/>
</dbReference>
<dbReference type="AGR" id="MGI:101784"/>
<dbReference type="CTD" id="10763"/>
<dbReference type="MGI" id="MGI:101784">
    <property type="gene designation" value="Nes"/>
</dbReference>
<dbReference type="VEuPathDB" id="HostDB:ENSMUSG00000004891"/>
<dbReference type="eggNOG" id="ENOG502RYFK">
    <property type="taxonomic scope" value="Eukaryota"/>
</dbReference>
<dbReference type="GeneTree" id="ENSGT00940000162240"/>
<dbReference type="HOGENOM" id="CLU_003317_0_0_1"/>
<dbReference type="InParanoid" id="Q6P5H2"/>
<dbReference type="OMA" id="CQEVENQ"/>
<dbReference type="OrthoDB" id="8886319at2759"/>
<dbReference type="PhylomeDB" id="Q6P5H2"/>
<dbReference type="TreeFam" id="TF336633"/>
<dbReference type="BioGRID-ORCS" id="18008">
    <property type="hits" value="4 hits in 77 CRISPR screens"/>
</dbReference>
<dbReference type="ChiTaRS" id="Nes">
    <property type="organism name" value="mouse"/>
</dbReference>
<dbReference type="PRO" id="PR:Q6P5H2"/>
<dbReference type="Proteomes" id="UP000000589">
    <property type="component" value="Chromosome 3"/>
</dbReference>
<dbReference type="RNAct" id="Q6P5H2">
    <property type="molecule type" value="protein"/>
</dbReference>
<dbReference type="Bgee" id="ENSMUSG00000004891">
    <property type="expression patterns" value="Expressed in floor plate of midbrain and 252 other cell types or tissues"/>
</dbReference>
<dbReference type="GO" id="GO:0005737">
    <property type="term" value="C:cytoplasm"/>
    <property type="evidence" value="ECO:0000314"/>
    <property type="project" value="MGI"/>
</dbReference>
<dbReference type="GO" id="GO:0005882">
    <property type="term" value="C:intermediate filament"/>
    <property type="evidence" value="ECO:0000314"/>
    <property type="project" value="MGI"/>
</dbReference>
<dbReference type="GO" id="GO:0019215">
    <property type="term" value="F:intermediate filament binding"/>
    <property type="evidence" value="ECO:0000250"/>
    <property type="project" value="UniProtKB"/>
</dbReference>
<dbReference type="GO" id="GO:0007420">
    <property type="term" value="P:brain development"/>
    <property type="evidence" value="ECO:0000250"/>
    <property type="project" value="UniProtKB"/>
</dbReference>
<dbReference type="GO" id="GO:0048858">
    <property type="term" value="P:cell projection morphogenesis"/>
    <property type="evidence" value="ECO:0000315"/>
    <property type="project" value="MGI"/>
</dbReference>
<dbReference type="GO" id="GO:0031076">
    <property type="term" value="P:embryonic camera-type eye development"/>
    <property type="evidence" value="ECO:0000250"/>
    <property type="project" value="UniProtKB"/>
</dbReference>
<dbReference type="GO" id="GO:0000086">
    <property type="term" value="P:G2/M transition of mitotic cell cycle"/>
    <property type="evidence" value="ECO:0007669"/>
    <property type="project" value="Ensembl"/>
</dbReference>
<dbReference type="GO" id="GO:0043524">
    <property type="term" value="P:negative regulation of neuron apoptotic process"/>
    <property type="evidence" value="ECO:0000315"/>
    <property type="project" value="MGI"/>
</dbReference>
<dbReference type="GO" id="GO:0007399">
    <property type="term" value="P:nervous system development"/>
    <property type="evidence" value="ECO:0000314"/>
    <property type="project" value="MGI"/>
</dbReference>
<dbReference type="GO" id="GO:0051402">
    <property type="term" value="P:neuron apoptotic process"/>
    <property type="evidence" value="ECO:0000315"/>
    <property type="project" value="MGI"/>
</dbReference>
<dbReference type="GO" id="GO:0030844">
    <property type="term" value="P:positive regulation of intermediate filament depolymerization"/>
    <property type="evidence" value="ECO:0000250"/>
    <property type="project" value="UniProtKB"/>
</dbReference>
<dbReference type="GO" id="GO:2000179">
    <property type="term" value="P:positive regulation of neural precursor cell proliferation"/>
    <property type="evidence" value="ECO:0000250"/>
    <property type="project" value="UniProtKB"/>
</dbReference>
<dbReference type="GO" id="GO:0072089">
    <property type="term" value="P:stem cell proliferation"/>
    <property type="evidence" value="ECO:0007669"/>
    <property type="project" value="Ensembl"/>
</dbReference>
<dbReference type="FunFam" id="1.20.5.170:FF:000081">
    <property type="entry name" value="Nestin"/>
    <property type="match status" value="1"/>
</dbReference>
<dbReference type="Gene3D" id="1.20.5.170">
    <property type="match status" value="1"/>
</dbReference>
<dbReference type="Gene3D" id="1.20.5.1160">
    <property type="entry name" value="Vasodilator-stimulated phosphoprotein"/>
    <property type="match status" value="1"/>
</dbReference>
<dbReference type="InterPro" id="IPR018039">
    <property type="entry name" value="IF_conserved"/>
</dbReference>
<dbReference type="InterPro" id="IPR039008">
    <property type="entry name" value="IF_rod_dom"/>
</dbReference>
<dbReference type="InterPro" id="IPR031211">
    <property type="entry name" value="Nestin"/>
</dbReference>
<dbReference type="PANTHER" id="PTHR47051">
    <property type="entry name" value="NESTIN"/>
    <property type="match status" value="1"/>
</dbReference>
<dbReference type="PANTHER" id="PTHR47051:SF1">
    <property type="entry name" value="NESTIN"/>
    <property type="match status" value="1"/>
</dbReference>
<dbReference type="Pfam" id="PF00038">
    <property type="entry name" value="Filament"/>
    <property type="match status" value="1"/>
</dbReference>
<dbReference type="SMART" id="SM01391">
    <property type="entry name" value="Filament"/>
    <property type="match status" value="1"/>
</dbReference>
<dbReference type="SUPFAM" id="SSF64593">
    <property type="entry name" value="Intermediate filament protein, coiled coil region"/>
    <property type="match status" value="2"/>
</dbReference>
<dbReference type="PROSITE" id="PS00226">
    <property type="entry name" value="IF_ROD_1"/>
    <property type="match status" value="1"/>
</dbReference>
<dbReference type="PROSITE" id="PS51842">
    <property type="entry name" value="IF_ROD_2"/>
    <property type="match status" value="1"/>
</dbReference>
<feature type="chain" id="PRO_0000285856" description="Nestin">
    <location>
        <begin position="1"/>
        <end position="1864"/>
    </location>
</feature>
<feature type="domain" description="IF rod" evidence="4">
    <location>
        <begin position="8"/>
        <end position="314"/>
    </location>
</feature>
<feature type="region of interest" description="Head">
    <location>
        <begin position="1"/>
        <end position="7"/>
    </location>
</feature>
<feature type="region of interest" description="Coil 1A">
    <location>
        <begin position="8"/>
        <end position="43"/>
    </location>
</feature>
<feature type="region of interest" description="Linker 1">
    <location>
        <begin position="44"/>
        <end position="55"/>
    </location>
</feature>
<feature type="region of interest" description="Coil 1B">
    <location>
        <begin position="56"/>
        <end position="151"/>
    </location>
</feature>
<feature type="region of interest" description="Linker 12">
    <location>
        <begin position="152"/>
        <end position="174"/>
    </location>
</feature>
<feature type="region of interest" description="Coil 2A">
    <location>
        <begin position="175"/>
        <end position="193"/>
    </location>
</feature>
<feature type="region of interest" description="Linker 2">
    <location>
        <begin position="194"/>
        <end position="196"/>
    </location>
</feature>
<feature type="region of interest" description="Coil 2B">
    <location>
        <begin position="197"/>
        <end position="314"/>
    </location>
</feature>
<feature type="region of interest" description="Tail">
    <location>
        <begin position="315"/>
        <end position="1864"/>
    </location>
</feature>
<feature type="region of interest" description="Disordered" evidence="5">
    <location>
        <begin position="437"/>
        <end position="492"/>
    </location>
</feature>
<feature type="region of interest" description="Disordered" evidence="5">
    <location>
        <begin position="515"/>
        <end position="625"/>
    </location>
</feature>
<feature type="region of interest" description="Disordered" evidence="5">
    <location>
        <begin position="680"/>
        <end position="845"/>
    </location>
</feature>
<feature type="region of interest" description="Disordered" evidence="5">
    <location>
        <begin position="916"/>
        <end position="1113"/>
    </location>
</feature>
<feature type="region of interest" description="Disordered" evidence="5">
    <location>
        <begin position="1129"/>
        <end position="1158"/>
    </location>
</feature>
<feature type="region of interest" description="Disordered" evidence="5">
    <location>
        <begin position="1175"/>
        <end position="1344"/>
    </location>
</feature>
<feature type="region of interest" description="Disordered" evidence="5">
    <location>
        <begin position="1375"/>
        <end position="1722"/>
    </location>
</feature>
<feature type="region of interest" description="Disordered" evidence="5">
    <location>
        <begin position="1735"/>
        <end position="1807"/>
    </location>
</feature>
<feature type="region of interest" description="Disordered" evidence="5">
    <location>
        <begin position="1841"/>
        <end position="1864"/>
    </location>
</feature>
<feature type="compositionally biased region" description="Basic and acidic residues" evidence="5">
    <location>
        <begin position="469"/>
        <end position="480"/>
    </location>
</feature>
<feature type="compositionally biased region" description="Polar residues" evidence="5">
    <location>
        <begin position="559"/>
        <end position="573"/>
    </location>
</feature>
<feature type="compositionally biased region" description="Basic and acidic residues" evidence="5">
    <location>
        <begin position="575"/>
        <end position="598"/>
    </location>
</feature>
<feature type="compositionally biased region" description="Basic and acidic residues" evidence="5">
    <location>
        <begin position="609"/>
        <end position="618"/>
    </location>
</feature>
<feature type="compositionally biased region" description="Basic and acidic residues" evidence="5">
    <location>
        <begin position="680"/>
        <end position="690"/>
    </location>
</feature>
<feature type="compositionally biased region" description="Basic and acidic residues" evidence="5">
    <location>
        <begin position="698"/>
        <end position="732"/>
    </location>
</feature>
<feature type="compositionally biased region" description="Basic and acidic residues" evidence="5">
    <location>
        <begin position="742"/>
        <end position="776"/>
    </location>
</feature>
<feature type="compositionally biased region" description="Basic and acidic residues" evidence="5">
    <location>
        <begin position="786"/>
        <end position="843"/>
    </location>
</feature>
<feature type="compositionally biased region" description="Basic and acidic residues" evidence="5">
    <location>
        <begin position="916"/>
        <end position="925"/>
    </location>
</feature>
<feature type="compositionally biased region" description="Basic and acidic residues" evidence="5">
    <location>
        <begin position="947"/>
        <end position="965"/>
    </location>
</feature>
<feature type="compositionally biased region" description="Basic and acidic residues" evidence="5">
    <location>
        <begin position="978"/>
        <end position="1012"/>
    </location>
</feature>
<feature type="compositionally biased region" description="Basic and acidic residues" evidence="5">
    <location>
        <begin position="1065"/>
        <end position="1090"/>
    </location>
</feature>
<feature type="compositionally biased region" description="Polar residues" evidence="5">
    <location>
        <begin position="1133"/>
        <end position="1143"/>
    </location>
</feature>
<feature type="compositionally biased region" description="Basic and acidic residues" evidence="5">
    <location>
        <begin position="1204"/>
        <end position="1213"/>
    </location>
</feature>
<feature type="compositionally biased region" description="Basic and acidic residues" evidence="5">
    <location>
        <begin position="1254"/>
        <end position="1273"/>
    </location>
</feature>
<feature type="compositionally biased region" description="Basic and acidic residues" evidence="5">
    <location>
        <begin position="1384"/>
        <end position="1405"/>
    </location>
</feature>
<feature type="compositionally biased region" description="Acidic residues" evidence="5">
    <location>
        <begin position="1429"/>
        <end position="1440"/>
    </location>
</feature>
<feature type="compositionally biased region" description="Basic and acidic residues" evidence="5">
    <location>
        <begin position="1514"/>
        <end position="1527"/>
    </location>
</feature>
<feature type="compositionally biased region" description="Acidic residues" evidence="5">
    <location>
        <begin position="1532"/>
        <end position="1547"/>
    </location>
</feature>
<feature type="compositionally biased region" description="Acidic residues" evidence="5">
    <location>
        <begin position="1612"/>
        <end position="1621"/>
    </location>
</feature>
<feature type="compositionally biased region" description="Acidic residues" evidence="5">
    <location>
        <begin position="1658"/>
        <end position="1680"/>
    </location>
</feature>
<feature type="compositionally biased region" description="Basic and acidic residues" evidence="5">
    <location>
        <begin position="1703"/>
        <end position="1712"/>
    </location>
</feature>
<feature type="compositionally biased region" description="Low complexity" evidence="5">
    <location>
        <begin position="1713"/>
        <end position="1722"/>
    </location>
</feature>
<feature type="compositionally biased region" description="Low complexity" evidence="5">
    <location>
        <begin position="1741"/>
        <end position="1755"/>
    </location>
</feature>
<feature type="compositionally biased region" description="Polar residues" evidence="5">
    <location>
        <begin position="1788"/>
        <end position="1797"/>
    </location>
</feature>
<feature type="modified residue" description="N-acetylmethionine" evidence="3">
    <location>
        <position position="1"/>
    </location>
</feature>
<feature type="modified residue" description="Phosphoserine" evidence="3">
    <location>
        <position position="312"/>
    </location>
</feature>
<feature type="modified residue" description="Phosphothreonine" evidence="3">
    <location>
        <position position="316"/>
    </location>
</feature>
<feature type="modified residue" description="Phosphoserine" evidence="3">
    <location>
        <position position="356"/>
    </location>
</feature>
<feature type="modified residue" description="Phosphoserine" evidence="3">
    <location>
        <position position="359"/>
    </location>
</feature>
<feature type="modified residue" description="Phosphothreonine" evidence="3">
    <location>
        <position position="389"/>
    </location>
</feature>
<feature type="modified residue" description="Phosphoserine" evidence="3">
    <location>
        <position position="565"/>
    </location>
</feature>
<feature type="modified residue" description="Phosphoserine" evidence="3">
    <location>
        <position position="575"/>
    </location>
</feature>
<feature type="modified residue" description="Phosphoserine" evidence="11">
    <location>
        <position position="623"/>
    </location>
</feature>
<feature type="modified residue" description="Phosphoserine" evidence="3">
    <location>
        <position position="688"/>
    </location>
</feature>
<feature type="modified residue" description="Phosphoserine" evidence="11">
    <location>
        <position position="731"/>
    </location>
</feature>
<feature type="modified residue" description="Phosphoserine" evidence="11">
    <location>
        <position position="775"/>
    </location>
</feature>
<feature type="modified residue" description="Phosphoserine" evidence="3">
    <location>
        <position position="841"/>
    </location>
</feature>
<feature type="modified residue" description="Phosphoserine" evidence="11">
    <location>
        <position position="862"/>
    </location>
</feature>
<feature type="modified residue" description="Phosphoserine" evidence="11">
    <location>
        <position position="894"/>
    </location>
</feature>
<feature type="modified residue" description="Phosphoserine" evidence="11">
    <location>
        <position position="963"/>
    </location>
</feature>
<feature type="modified residue" description="Phosphoserine" evidence="2">
    <location>
        <position position="1010"/>
    </location>
</feature>
<feature type="modified residue" description="Phosphoserine" evidence="11">
    <location>
        <position position="1021"/>
    </location>
</feature>
<feature type="modified residue" description="Phosphoserine" evidence="3">
    <location>
        <position position="1106"/>
    </location>
</feature>
<feature type="modified residue" description="Phosphoserine" evidence="2">
    <location>
        <position position="1127"/>
    </location>
</feature>
<feature type="modified residue" description="Phosphoserine" evidence="3">
    <location>
        <position position="1177"/>
    </location>
</feature>
<feature type="modified residue" description="Phosphoserine" evidence="3">
    <location>
        <position position="1188"/>
    </location>
</feature>
<feature type="modified residue" description="Phosphoserine" evidence="3">
    <location>
        <position position="1195"/>
    </location>
</feature>
<feature type="modified residue" description="Phosphoserine" evidence="11">
    <location>
        <position position="1216"/>
    </location>
</feature>
<feature type="modified residue" description="Phosphoserine" evidence="3">
    <location>
        <position position="1290"/>
    </location>
</feature>
<feature type="modified residue" description="Phosphoserine" evidence="9 11">
    <location>
        <position position="1541"/>
    </location>
</feature>
<feature type="modified residue" description="Phosphoserine" evidence="11">
    <location>
        <position position="1565"/>
    </location>
</feature>
<feature type="modified residue" description="Phosphoserine" evidence="3">
    <location>
        <position position="1656"/>
    </location>
</feature>
<feature type="modified residue" description="Phosphoserine" evidence="3">
    <location>
        <position position="1665"/>
    </location>
</feature>
<feature type="modified residue" description="Phosphoserine" evidence="3">
    <location>
        <position position="1745"/>
    </location>
</feature>
<feature type="modified residue" description="Phosphoserine" evidence="3">
    <location>
        <position position="1747"/>
    </location>
</feature>
<feature type="modified residue" description="Phosphoserine" evidence="10">
    <location>
        <position position="1837"/>
    </location>
</feature>
<feature type="modified residue" description="Phosphoserine" evidence="3">
    <location>
        <position position="1860"/>
    </location>
</feature>
<feature type="modified residue" description="Phosphoserine" evidence="3">
    <location>
        <position position="1861"/>
    </location>
</feature>
<feature type="splice variant" id="VSP_024923" description="In isoform 2." evidence="7">
    <location>
        <begin position="750"/>
        <end position="793"/>
    </location>
</feature>
<feature type="sequence conflict" description="In Ref. 1; AAF04456." evidence="8" ref="1">
    <original>G</original>
    <variation>C</variation>
    <location>
        <position position="184"/>
    </location>
</feature>
<feature type="sequence conflict" description="In Ref. 1; AAF04456." evidence="8" ref="1">
    <original>A</original>
    <variation>P</variation>
    <location>
        <position position="257"/>
    </location>
</feature>
<feature type="sequence conflict" description="In Ref. 1; AAF04456." evidence="8" ref="1">
    <original>V</original>
    <variation>L</variation>
    <location>
        <position position="265"/>
    </location>
</feature>
<feature type="sequence conflict" description="In Ref. 1; AAF04456." evidence="8" ref="1">
    <original>R</original>
    <variation>G</variation>
    <location>
        <position position="319"/>
    </location>
</feature>
<feature type="sequence conflict" description="In Ref. 1; AAF04456." evidence="8" ref="1">
    <original>T</original>
    <variation>S</variation>
    <location>
        <position position="458"/>
    </location>
</feature>
<feature type="sequence conflict" description="In Ref. 1; AAF04456." evidence="8" ref="1">
    <original>M</original>
    <variation>K</variation>
    <location>
        <position position="535"/>
    </location>
</feature>
<feature type="sequence conflict" description="In Ref. 1; AAF04456." evidence="8" ref="1">
    <original>E</original>
    <variation>K</variation>
    <location>
        <position position="544"/>
    </location>
</feature>
<feature type="sequence conflict" description="In Ref. 1; AAF04456." evidence="8" ref="1">
    <original>G</original>
    <variation>R</variation>
    <location>
        <position position="558"/>
    </location>
</feature>
<feature type="sequence conflict" description="In Ref. 1; AAF04456." evidence="8" ref="1">
    <original>S</original>
    <variation>L</variation>
    <location>
        <position position="570"/>
    </location>
</feature>
<feature type="sequence conflict" description="In Ref. 1; AAF04456." evidence="8" ref="1">
    <original>L</original>
    <variation>S</variation>
    <location>
        <position position="587"/>
    </location>
</feature>
<feature type="sequence conflict" description="In Ref. 1; AAF04456." evidence="8" ref="1">
    <original>M</original>
    <variation>I</variation>
    <location>
        <position position="673"/>
    </location>
</feature>
<feature type="sequence conflict" description="In Ref. 1; AAF04456." evidence="8" ref="1">
    <original>Q</original>
    <variation>L</variation>
    <location>
        <position position="704"/>
    </location>
</feature>
<feature type="sequence conflict" description="In Ref. 1; AAF04456." evidence="8" ref="1">
    <original>E</original>
    <variation>D</variation>
    <location>
        <position position="734"/>
    </location>
</feature>
<feature type="sequence conflict" description="In Ref. 1; AAF04456." evidence="8" ref="1">
    <original>L</original>
    <variation>P</variation>
    <location>
        <position position="851"/>
    </location>
</feature>
<feature type="sequence conflict" description="In Ref. 1; AAF04456." evidence="8" ref="1">
    <original>K</original>
    <variation>R</variation>
    <location>
        <position position="855"/>
    </location>
</feature>
<feature type="sequence conflict" description="In Ref. 1; AAF04456." evidence="8" ref="1">
    <original>E</original>
    <variation>D</variation>
    <location>
        <position position="900"/>
    </location>
</feature>
<feature type="sequence conflict" description="In Ref. 1; AAF04456." evidence="8" ref="1">
    <original>RKSL</original>
    <variation>GKFF</variation>
    <location>
        <begin position="1008"/>
        <end position="1011"/>
    </location>
</feature>
<feature type="sequence conflict" description="In Ref. 1; AAF04456." evidence="8" ref="1">
    <original>S</original>
    <variation>F</variation>
    <location>
        <position position="1021"/>
    </location>
</feature>
<feature type="sequence conflict" description="In Ref. 1; AAF04456." evidence="8" ref="1">
    <original>C</original>
    <variation>S</variation>
    <location>
        <position position="1157"/>
    </location>
</feature>
<feature type="sequence conflict" description="In Ref. 1; AAF04456." evidence="8" ref="1">
    <original>E</original>
    <variation>EV</variation>
    <location>
        <position position="1241"/>
    </location>
</feature>
<feature type="sequence conflict" description="In Ref. 5; ABK96808." evidence="8" ref="5">
    <original>G</original>
    <variation>A</variation>
    <location>
        <position position="1382"/>
    </location>
</feature>
<feature type="sequence conflict" description="In Ref. 1; AAF04456." evidence="8" ref="1">
    <original>A</original>
    <variation>T</variation>
    <location>
        <position position="1404"/>
    </location>
</feature>
<feature type="sequence conflict" description="In Ref. 1; AAF04456." evidence="8" ref="1">
    <original>G</original>
    <variation>S</variation>
    <location>
        <position position="1410"/>
    </location>
</feature>
<feature type="sequence conflict" description="In Ref. 1; AAF04456." evidence="8" ref="1">
    <original>F</original>
    <variation>S</variation>
    <location>
        <position position="1577"/>
    </location>
</feature>
<feature type="sequence conflict" description="In Ref. 1; AAF04456." evidence="8" ref="1">
    <original>GWSPAA</original>
    <variation>DWGPAV</variation>
    <location>
        <begin position="1586"/>
        <end position="1591"/>
    </location>
</feature>
<feature type="sequence conflict" description="In Ref. 1; AAF04456." evidence="8" ref="1">
    <original>T</original>
    <variation>A</variation>
    <location>
        <position position="1684"/>
    </location>
</feature>
<feature type="sequence conflict" description="In Ref. 1; AAF04456." evidence="8" ref="1">
    <original>G</original>
    <variation>D</variation>
    <location>
        <position position="1821"/>
    </location>
</feature>
<name>NEST_MOUSE</name>
<reference key="1">
    <citation type="journal article" date="2000" name="Mech. Dev.">
        <title>Nestin expression during mouse eye and lens development.</title>
        <authorList>
            <person name="Yang J."/>
            <person name="Bian W."/>
            <person name="Gao X."/>
            <person name="Chen L."/>
            <person name="Jing N."/>
        </authorList>
    </citation>
    <scope>NUCLEOTIDE SEQUENCE [MRNA] (ISOFORM 2)</scope>
    <source>
        <strain>BALB/cJ</strain>
    </source>
</reference>
<reference key="2">
    <citation type="journal article" date="2004" name="Genome Res.">
        <title>The status, quality, and expansion of the NIH full-length cDNA project: the Mammalian Gene Collection (MGC).</title>
        <authorList>
            <consortium name="The MGC Project Team"/>
        </authorList>
    </citation>
    <scope>NUCLEOTIDE SEQUENCE [LARGE SCALE MRNA] (ISOFORM 1)</scope>
    <source>
        <strain>C57BL/6J</strain>
        <tissue>Brain</tissue>
    </source>
</reference>
<reference key="3">
    <citation type="journal article" date="2005" name="Science">
        <title>The transcriptional landscape of the mammalian genome.</title>
        <authorList>
            <person name="Carninci P."/>
            <person name="Kasukawa T."/>
            <person name="Katayama S."/>
            <person name="Gough J."/>
            <person name="Frith M.C."/>
            <person name="Maeda N."/>
            <person name="Oyama R."/>
            <person name="Ravasi T."/>
            <person name="Lenhard B."/>
            <person name="Wells C."/>
            <person name="Kodzius R."/>
            <person name="Shimokawa K."/>
            <person name="Bajic V.B."/>
            <person name="Brenner S.E."/>
            <person name="Batalov S."/>
            <person name="Forrest A.R."/>
            <person name="Zavolan M."/>
            <person name="Davis M.J."/>
            <person name="Wilming L.G."/>
            <person name="Aidinis V."/>
            <person name="Allen J.E."/>
            <person name="Ambesi-Impiombato A."/>
            <person name="Apweiler R."/>
            <person name="Aturaliya R.N."/>
            <person name="Bailey T.L."/>
            <person name="Bansal M."/>
            <person name="Baxter L."/>
            <person name="Beisel K.W."/>
            <person name="Bersano T."/>
            <person name="Bono H."/>
            <person name="Chalk A.M."/>
            <person name="Chiu K.P."/>
            <person name="Choudhary V."/>
            <person name="Christoffels A."/>
            <person name="Clutterbuck D.R."/>
            <person name="Crowe M.L."/>
            <person name="Dalla E."/>
            <person name="Dalrymple B.P."/>
            <person name="de Bono B."/>
            <person name="Della Gatta G."/>
            <person name="di Bernardo D."/>
            <person name="Down T."/>
            <person name="Engstrom P."/>
            <person name="Fagiolini M."/>
            <person name="Faulkner G."/>
            <person name="Fletcher C.F."/>
            <person name="Fukushima T."/>
            <person name="Furuno M."/>
            <person name="Futaki S."/>
            <person name="Gariboldi M."/>
            <person name="Georgii-Hemming P."/>
            <person name="Gingeras T.R."/>
            <person name="Gojobori T."/>
            <person name="Green R.E."/>
            <person name="Gustincich S."/>
            <person name="Harbers M."/>
            <person name="Hayashi Y."/>
            <person name="Hensch T.K."/>
            <person name="Hirokawa N."/>
            <person name="Hill D."/>
            <person name="Huminiecki L."/>
            <person name="Iacono M."/>
            <person name="Ikeo K."/>
            <person name="Iwama A."/>
            <person name="Ishikawa T."/>
            <person name="Jakt M."/>
            <person name="Kanapin A."/>
            <person name="Katoh M."/>
            <person name="Kawasawa Y."/>
            <person name="Kelso J."/>
            <person name="Kitamura H."/>
            <person name="Kitano H."/>
            <person name="Kollias G."/>
            <person name="Krishnan S.P."/>
            <person name="Kruger A."/>
            <person name="Kummerfeld S.K."/>
            <person name="Kurochkin I.V."/>
            <person name="Lareau L.F."/>
            <person name="Lazarevic D."/>
            <person name="Lipovich L."/>
            <person name="Liu J."/>
            <person name="Liuni S."/>
            <person name="McWilliam S."/>
            <person name="Madan Babu M."/>
            <person name="Madera M."/>
            <person name="Marchionni L."/>
            <person name="Matsuda H."/>
            <person name="Matsuzawa S."/>
            <person name="Miki H."/>
            <person name="Mignone F."/>
            <person name="Miyake S."/>
            <person name="Morris K."/>
            <person name="Mottagui-Tabar S."/>
            <person name="Mulder N."/>
            <person name="Nakano N."/>
            <person name="Nakauchi H."/>
            <person name="Ng P."/>
            <person name="Nilsson R."/>
            <person name="Nishiguchi S."/>
            <person name="Nishikawa S."/>
            <person name="Nori F."/>
            <person name="Ohara O."/>
            <person name="Okazaki Y."/>
            <person name="Orlando V."/>
            <person name="Pang K.C."/>
            <person name="Pavan W.J."/>
            <person name="Pavesi G."/>
            <person name="Pesole G."/>
            <person name="Petrovsky N."/>
            <person name="Piazza S."/>
            <person name="Reed J."/>
            <person name="Reid J.F."/>
            <person name="Ring B.Z."/>
            <person name="Ringwald M."/>
            <person name="Rost B."/>
            <person name="Ruan Y."/>
            <person name="Salzberg S.L."/>
            <person name="Sandelin A."/>
            <person name="Schneider C."/>
            <person name="Schoenbach C."/>
            <person name="Sekiguchi K."/>
            <person name="Semple C.A."/>
            <person name="Seno S."/>
            <person name="Sessa L."/>
            <person name="Sheng Y."/>
            <person name="Shibata Y."/>
            <person name="Shimada H."/>
            <person name="Shimada K."/>
            <person name="Silva D."/>
            <person name="Sinclair B."/>
            <person name="Sperling S."/>
            <person name="Stupka E."/>
            <person name="Sugiura K."/>
            <person name="Sultana R."/>
            <person name="Takenaka Y."/>
            <person name="Taki K."/>
            <person name="Tammoja K."/>
            <person name="Tan S.L."/>
            <person name="Tang S."/>
            <person name="Taylor M.S."/>
            <person name="Tegner J."/>
            <person name="Teichmann S.A."/>
            <person name="Ueda H.R."/>
            <person name="van Nimwegen E."/>
            <person name="Verardo R."/>
            <person name="Wei C.L."/>
            <person name="Yagi K."/>
            <person name="Yamanishi H."/>
            <person name="Zabarovsky E."/>
            <person name="Zhu S."/>
            <person name="Zimmer A."/>
            <person name="Hide W."/>
            <person name="Bult C."/>
            <person name="Grimmond S.M."/>
            <person name="Teasdale R.D."/>
            <person name="Liu E.T."/>
            <person name="Brusic V."/>
            <person name="Quackenbush J."/>
            <person name="Wahlestedt C."/>
            <person name="Mattick J.S."/>
            <person name="Hume D.A."/>
            <person name="Kai C."/>
            <person name="Sasaki D."/>
            <person name="Tomaru Y."/>
            <person name="Fukuda S."/>
            <person name="Kanamori-Katayama M."/>
            <person name="Suzuki M."/>
            <person name="Aoki J."/>
            <person name="Arakawa T."/>
            <person name="Iida J."/>
            <person name="Imamura K."/>
            <person name="Itoh M."/>
            <person name="Kato T."/>
            <person name="Kawaji H."/>
            <person name="Kawagashira N."/>
            <person name="Kawashima T."/>
            <person name="Kojima M."/>
            <person name="Kondo S."/>
            <person name="Konno H."/>
            <person name="Nakano K."/>
            <person name="Ninomiya N."/>
            <person name="Nishio T."/>
            <person name="Okada M."/>
            <person name="Plessy C."/>
            <person name="Shibata K."/>
            <person name="Shiraki T."/>
            <person name="Suzuki S."/>
            <person name="Tagami M."/>
            <person name="Waki K."/>
            <person name="Watahiki A."/>
            <person name="Okamura-Oho Y."/>
            <person name="Suzuki H."/>
            <person name="Kawai J."/>
            <person name="Hayashizaki Y."/>
        </authorList>
    </citation>
    <scope>NUCLEOTIDE SEQUENCE [LARGE SCALE MRNA] OF 1-764 AND 1510-1864</scope>
    <source>
        <strain>C57BL/6J</strain>
        <tissue>Tongue</tissue>
    </source>
</reference>
<reference key="4">
    <citation type="journal article" date="1995" name="J. Histochem. Cytochem.">
        <title>Intermediate filaments in cardiac myogenesis: nestin in the developing mouse heart.</title>
        <authorList>
            <person name="Kachinsky A.M."/>
            <person name="Dominov J.A."/>
            <person name="Miller J.B."/>
        </authorList>
    </citation>
    <scope>NUCLEOTIDE SEQUENCE [MRNA] OF 33-57</scope>
    <source>
        <tissue>Heart</tissue>
    </source>
</reference>
<reference key="5">
    <citation type="submission" date="2006-11" db="EMBL/GenBank/DDBJ databases">
        <title>Novel metastatic mouse tumor cells express multiple properties of macrophages.</title>
        <authorList>
            <person name="Huysentruyt L.C."/>
            <person name="Banerjee D."/>
            <person name="Seyfried T.N."/>
        </authorList>
    </citation>
    <scope>NUCLEOTIDE SEQUENCE [MRNA] OF 1358-1514</scope>
    <source>
        <strain>VM</strain>
    </source>
</reference>
<reference key="6">
    <citation type="journal article" date="2004" name="Mol. Cell. Proteomics">
        <title>Phosphoproteomic analysis of the developing mouse brain.</title>
        <authorList>
            <person name="Ballif B.A."/>
            <person name="Villen J."/>
            <person name="Beausoleil S.A."/>
            <person name="Schwartz D."/>
            <person name="Gygi S.P."/>
        </authorList>
    </citation>
    <scope>PHOSPHORYLATION [LARGE SCALE ANALYSIS] AT SER-1541</scope>
    <scope>IDENTIFICATION BY MASS SPECTROMETRY [LARGE SCALE ANALYSIS]</scope>
    <source>
        <tissue>Embryonic brain</tissue>
    </source>
</reference>
<reference key="7">
    <citation type="journal article" date="2007" name="Proc. Natl. Acad. Sci. U.S.A.">
        <title>Large-scale phosphorylation analysis of mouse liver.</title>
        <authorList>
            <person name="Villen J."/>
            <person name="Beausoleil S.A."/>
            <person name="Gerber S.A."/>
            <person name="Gygi S.P."/>
        </authorList>
    </citation>
    <scope>PHOSPHORYLATION [LARGE SCALE ANALYSIS] AT SER-1837</scope>
    <scope>IDENTIFICATION BY MASS SPECTROMETRY [LARGE SCALE ANALYSIS]</scope>
    <source>
        <tissue>Liver</tissue>
    </source>
</reference>
<reference key="8">
    <citation type="journal article" date="2010" name="Cell">
        <title>A tissue-specific atlas of mouse protein phosphorylation and expression.</title>
        <authorList>
            <person name="Huttlin E.L."/>
            <person name="Jedrychowski M.P."/>
            <person name="Elias J.E."/>
            <person name="Goswami T."/>
            <person name="Rad R."/>
            <person name="Beausoleil S.A."/>
            <person name="Villen J."/>
            <person name="Haas W."/>
            <person name="Sowa M.E."/>
            <person name="Gygi S.P."/>
        </authorList>
    </citation>
    <scope>PHOSPHORYLATION [LARGE SCALE ANALYSIS] AT SER-623; SER-731; SER-775; SER-862; SER-894; SER-963; SER-1021; SER-1216; SER-1541 AND SER-1565</scope>
    <scope>IDENTIFICATION BY MASS SPECTROMETRY [LARGE SCALE ANALYSIS]</scope>
    <source>
        <tissue>Brain</tissue>
        <tissue>Brown adipose tissue</tissue>
        <tissue>Heart</tissue>
        <tissue>Kidney</tissue>
        <tissue>Liver</tissue>
        <tissue>Lung</tissue>
        <tissue>Pancreas</tissue>
    </source>
</reference>
<reference key="9">
    <citation type="journal article" date="2010" name="Stem Cells">
        <title>Nestin is required for the proper self-renewal of neural stem cells.</title>
        <authorList>
            <person name="Park D."/>
            <person name="Xiang A.P."/>
            <person name="Mao F.F."/>
            <person name="Zhang L."/>
            <person name="Di C.G."/>
            <person name="Liu X.M."/>
            <person name="Shao Y."/>
            <person name="Ma B.F."/>
            <person name="Lee J.H."/>
            <person name="Ha K.S."/>
            <person name="Walton N."/>
            <person name="Lahn B.T."/>
        </authorList>
    </citation>
    <scope>FUNCTION</scope>
    <scope>DISRUPTION PHENOTYPE</scope>
</reference>
<sequence>MEGCVGEESFQMWELNRRLEAYLTRVKTLEEQNQLLSAELGGLRAQSGDASWRARADDELAALRVLVDQRWREKHEAEVQRDNLAEELESVAGRCQQVRLARERTIEEAACSRRALEAEKNARGWLSTQAAELERELEALRASHEEERAHLNAQAACTPRRPPAPAHASPIRAPEVEELARRLGEVWRGAVRDYQERVAHMESSLGQARERLGQAVRGARESRLEVQQLQADRDSLQERREALEQRLEGRWQDRLQATEKFQLAVEALEQEKQGLQSQIAQILEGGQQLAHLKMSLSLEVATYRTLLEAENSRLQTPGRSSQASLGFPDPKLKLHFLGIPEDQHLGSVLPVLSPTSFSSPLPNTLETPVTAFLKTQEFLKARTPTLASTPIPPMSEAPYPKNAEVRAQDVPHSLLQGGRQQAPEPLWAEATVPSSTGVLPELEEPGGEQPDHFPDDPTSLAPPLNPHHSILEAKDRESSESRVSSIFQEEEGQIWELVKKEAATEVKVENSLAQEIQESGLDTEEIQDSQGPLQMETLEALGDEPLMSLKTQNHETPGKENCNSSIEENSGTVKSPEKEKQTPLKSLEEKNVEAEKTLENGVLELSKPLGEEEPRMEDQELMSPEHTLETVSFLGKENQEVVRSSEEQNLESLITFKEESQYPLGGPEAEDQMLERLVEKEDQRFPRSPEEDQQAFRPLEKENQEPLRFEEAEDQVLERLIEKERQESLKSPEEEDQQAFRLLEKENQEPLRFEDAEDQVLERLIEKERQESLKSPEEEDQQAFRLLEKENQEPLRFEEAEDQVLERLVEKESQESLKSPEEEDQRTGKPLEKENQESLRSLDENQETIVLLESKNQRPLRSLEVEEEEQRIVKPLEKVSQVSLESLEKENVQSPRYLEEDDHMIKSLLEDKTHEILGSLEDRNGENFIPPENETQGSLRPPEEEDQRIVNHLEKESQEFLRSPEAEEEEEQVMVRSLEGENHDPLSSVVKEEQMAESKLENESQDSRKSLEDESQETFGSLEKENLESLRSLAGQDQEEQKLEQETQQPLRAVEDEQMTVNPPEKVDPELPKPLRNDQEVVRSLDKENQESLVSLNEGGMETVKSSETENIESLETVGECLGRRKSVDTQEPLWSTEVTSETIEPLEDETQEPLGCVDENQEVLTPLERESQELRSLGKWNPETVESPGGVEDSQQCLEVEEGPEREQHQESLRSLGEVEWELPGSGSQQRWEDVVEDGEGQEASLGATGVETEDKAELHLRGQGGEEKAVEEGELLQDAVGEAWSLGSSEPKEQRVPAEPLDDLEGQPEQTGTLEVPVAQGMPEATEQDEDRAQAGEQDSVEVTLGLEAARAGLELEQEVVGLEDPRHFAREEAIHPSLGEESVKAKIDQGLEEPGKEPKEAGALDSGIPELPKTSSETLECKGWEESGEGWGEEEASLETSDHEGSHAPQPRPPKTEEDEGLQAALTVPGPKLLEPCSPIPILTDAHELQPQAEGIQEAGWQPEAGTEALGRVEDEPEFGRGEIPEGLQDWEEGREDSEADELGETLPDSTPLGLYLKSPASPKWEQAGEQRLFPQGEARKEGWSPAALAAQGLSDPPEEEQQGHDSDLSSEEFEDLGTEASLLPGVPKEVSDHLGQEPPVLQPACWDQGGESDGFADEEESGEEGEEEDADEEEGAESGTQWWGPGPSGGGVKVQDVTQRGDLEHESVGDSGLWDDGLSGAAANVLVTALETVSQDSAEPSGSEGSESASLEGEEGQAIDHLDAPQEVTSVVPGAGDTFDISGQGPNLESEQVNGRMENGLEQAEGQVVLHGDEDQGIPLQEQGTLKAPLVGSPVHLGPSQPLKFTLSGVDGDSWSSGED</sequence>
<keyword id="KW-0007">Acetylation</keyword>
<keyword id="KW-0025">Alternative splicing</keyword>
<keyword id="KW-0175">Coiled coil</keyword>
<keyword id="KW-0217">Developmental protein</keyword>
<keyword id="KW-0403">Intermediate filament</keyword>
<keyword id="KW-0524">Neurogenesis</keyword>
<keyword id="KW-0597">Phosphoprotein</keyword>
<keyword id="KW-1185">Reference proteome</keyword>
<accession>Q6P5H2</accession>
<accession>A1E2I2</accession>
<accession>Q80X00</accession>
<accession>Q8BPH7</accession>
<accession>Q9CV43</accession>
<accession>Q9R0C4</accession>
<proteinExistence type="evidence at protein level"/>
<organism>
    <name type="scientific">Mus musculus</name>
    <name type="common">Mouse</name>
    <dbReference type="NCBI Taxonomy" id="10090"/>
    <lineage>
        <taxon>Eukaryota</taxon>
        <taxon>Metazoa</taxon>
        <taxon>Chordata</taxon>
        <taxon>Craniata</taxon>
        <taxon>Vertebrata</taxon>
        <taxon>Euteleostomi</taxon>
        <taxon>Mammalia</taxon>
        <taxon>Eutheria</taxon>
        <taxon>Euarchontoglires</taxon>
        <taxon>Glires</taxon>
        <taxon>Rodentia</taxon>
        <taxon>Myomorpha</taxon>
        <taxon>Muroidea</taxon>
        <taxon>Muridae</taxon>
        <taxon>Murinae</taxon>
        <taxon>Mus</taxon>
        <taxon>Mus</taxon>
    </lineage>
</organism>
<protein>
    <recommendedName>
        <fullName>Nestin</fullName>
    </recommendedName>
</protein>
<gene>
    <name type="primary">Nes</name>
</gene>
<comment type="function">
    <text evidence="1 6">Required for brain and eye development. Promotes the disassembly of phosphorylated vimentin intermediate filaments (IF) during mitosis and may play a role in the trafficking and distribution of IF proteins and other cellular factors to daughter cells during progenitor cell division (By similarity). Required for survival, renewal and mitogen-stimulated proliferation of neural progenitor cells.</text>
</comment>
<comment type="subunit">
    <text evidence="1">Forms homodimers and homotetramers in vitro. In mixtures with other intermediate filament proteins such as vimentin and alpha-internexin, this protein preferentially forms heterodimers which can assemble to form intermediate filaments if nestin does not exceed 25%. Interacts with FHOD3 (By similarity).</text>
</comment>
<comment type="alternative products">
    <event type="alternative splicing"/>
    <isoform>
        <id>Q6P5H2-1</id>
        <name>1</name>
        <sequence type="displayed"/>
    </isoform>
    <isoform>
        <id>Q6P5H2-2</id>
        <name>2</name>
        <sequence type="described" ref="VSP_024923"/>
    </isoform>
</comment>
<comment type="PTM">
    <text evidence="1">Constitutively phosphorylated. This increases during mitosis when the cytoplasmic intermediate filament network is reorganized (By similarity).</text>
</comment>
<comment type="disruption phenotype">
    <text evidence="6">Embryonic lethality with the neuroepithelium of developing neural tube exhibiting low numbers of neural stem cells and high levels of apoptosis. No effect on cytoskeletal integrity.</text>
</comment>
<comment type="similarity">
    <text evidence="4">Belongs to the intermediate filament family.</text>
</comment>